<reference key="1">
    <citation type="submission" date="2007-10" db="EMBL/GenBank/DDBJ databases">
        <title>Complete sequence of Shewanella pealeana ATCC 700345.</title>
        <authorList>
            <consortium name="US DOE Joint Genome Institute"/>
            <person name="Copeland A."/>
            <person name="Lucas S."/>
            <person name="Lapidus A."/>
            <person name="Barry K."/>
            <person name="Glavina del Rio T."/>
            <person name="Dalin E."/>
            <person name="Tice H."/>
            <person name="Pitluck S."/>
            <person name="Chertkov O."/>
            <person name="Brettin T."/>
            <person name="Bruce D."/>
            <person name="Detter J.C."/>
            <person name="Han C."/>
            <person name="Schmutz J."/>
            <person name="Larimer F."/>
            <person name="Land M."/>
            <person name="Hauser L."/>
            <person name="Kyrpides N."/>
            <person name="Kim E."/>
            <person name="Zhao J.-S.Z."/>
            <person name="Manno D."/>
            <person name="Hawari J."/>
            <person name="Richardson P."/>
        </authorList>
    </citation>
    <scope>NUCLEOTIDE SEQUENCE [LARGE SCALE GENOMIC DNA]</scope>
    <source>
        <strain>ATCC 700345 / ANG-SQ1</strain>
    </source>
</reference>
<dbReference type="EC" id="1.8.1.2" evidence="1"/>
<dbReference type="EMBL" id="CP000851">
    <property type="protein sequence ID" value="ABV85981.1"/>
    <property type="molecule type" value="Genomic_DNA"/>
</dbReference>
<dbReference type="RefSeq" id="WP_012153919.1">
    <property type="nucleotide sequence ID" value="NC_009901.1"/>
</dbReference>
<dbReference type="SMR" id="A8H094"/>
<dbReference type="STRING" id="398579.Spea_0654"/>
<dbReference type="KEGG" id="spl:Spea_0654"/>
<dbReference type="eggNOG" id="COG0155">
    <property type="taxonomic scope" value="Bacteria"/>
</dbReference>
<dbReference type="HOGENOM" id="CLU_001975_3_2_6"/>
<dbReference type="OrthoDB" id="3189055at2"/>
<dbReference type="UniPathway" id="UPA00140">
    <property type="reaction ID" value="UER00207"/>
</dbReference>
<dbReference type="Proteomes" id="UP000002608">
    <property type="component" value="Chromosome"/>
</dbReference>
<dbReference type="GO" id="GO:0009337">
    <property type="term" value="C:sulfite reductase complex (NADPH)"/>
    <property type="evidence" value="ECO:0007669"/>
    <property type="project" value="InterPro"/>
</dbReference>
<dbReference type="GO" id="GO:0051539">
    <property type="term" value="F:4 iron, 4 sulfur cluster binding"/>
    <property type="evidence" value="ECO:0007669"/>
    <property type="project" value="UniProtKB-KW"/>
</dbReference>
<dbReference type="GO" id="GO:0020037">
    <property type="term" value="F:heme binding"/>
    <property type="evidence" value="ECO:0007669"/>
    <property type="project" value="InterPro"/>
</dbReference>
<dbReference type="GO" id="GO:0046872">
    <property type="term" value="F:metal ion binding"/>
    <property type="evidence" value="ECO:0007669"/>
    <property type="project" value="UniProtKB-KW"/>
</dbReference>
<dbReference type="GO" id="GO:0050661">
    <property type="term" value="F:NADP binding"/>
    <property type="evidence" value="ECO:0007669"/>
    <property type="project" value="InterPro"/>
</dbReference>
<dbReference type="GO" id="GO:0050311">
    <property type="term" value="F:sulfite reductase (ferredoxin) activity"/>
    <property type="evidence" value="ECO:0007669"/>
    <property type="project" value="TreeGrafter"/>
</dbReference>
<dbReference type="GO" id="GO:0004783">
    <property type="term" value="F:sulfite reductase (NADPH) activity"/>
    <property type="evidence" value="ECO:0007669"/>
    <property type="project" value="UniProtKB-UniRule"/>
</dbReference>
<dbReference type="GO" id="GO:0019344">
    <property type="term" value="P:cysteine biosynthetic process"/>
    <property type="evidence" value="ECO:0007669"/>
    <property type="project" value="UniProtKB-KW"/>
</dbReference>
<dbReference type="GO" id="GO:0070814">
    <property type="term" value="P:hydrogen sulfide biosynthetic process"/>
    <property type="evidence" value="ECO:0007669"/>
    <property type="project" value="UniProtKB-UniRule"/>
</dbReference>
<dbReference type="GO" id="GO:0000103">
    <property type="term" value="P:sulfate assimilation"/>
    <property type="evidence" value="ECO:0007669"/>
    <property type="project" value="UniProtKB-UniRule"/>
</dbReference>
<dbReference type="FunFam" id="3.30.413.10:FF:000003">
    <property type="entry name" value="Sulfite reductase [NADPH] hemoprotein beta-component"/>
    <property type="match status" value="1"/>
</dbReference>
<dbReference type="FunFam" id="3.30.413.10:FF:000004">
    <property type="entry name" value="Sulfite reductase [NADPH] hemoprotein beta-component"/>
    <property type="match status" value="1"/>
</dbReference>
<dbReference type="Gene3D" id="3.30.413.10">
    <property type="entry name" value="Sulfite Reductase Hemoprotein, domain 1"/>
    <property type="match status" value="2"/>
</dbReference>
<dbReference type="HAMAP" id="MF_01540">
    <property type="entry name" value="CysI"/>
    <property type="match status" value="1"/>
</dbReference>
<dbReference type="InterPro" id="IPR011786">
    <property type="entry name" value="CysI"/>
</dbReference>
<dbReference type="InterPro" id="IPR005117">
    <property type="entry name" value="NiRdtase/SiRdtase_haem-b_fer"/>
</dbReference>
<dbReference type="InterPro" id="IPR036136">
    <property type="entry name" value="Nit/Sulf_reduc_fer-like_dom_sf"/>
</dbReference>
<dbReference type="InterPro" id="IPR006067">
    <property type="entry name" value="NO2/SO3_Rdtase_4Fe4S_dom"/>
</dbReference>
<dbReference type="InterPro" id="IPR045169">
    <property type="entry name" value="NO2/SO3_Rdtase_4Fe4S_prot"/>
</dbReference>
<dbReference type="InterPro" id="IPR045854">
    <property type="entry name" value="NO2/SO3_Rdtase_4Fe4S_sf"/>
</dbReference>
<dbReference type="InterPro" id="IPR006066">
    <property type="entry name" value="NO2/SO3_Rdtase_FeS/sirohaem_BS"/>
</dbReference>
<dbReference type="NCBIfam" id="TIGR02041">
    <property type="entry name" value="CysI"/>
    <property type="match status" value="1"/>
</dbReference>
<dbReference type="NCBIfam" id="NF010029">
    <property type="entry name" value="PRK13504.1"/>
    <property type="match status" value="1"/>
</dbReference>
<dbReference type="PANTHER" id="PTHR11493:SF47">
    <property type="entry name" value="SULFITE REDUCTASE [NADPH] SUBUNIT BETA"/>
    <property type="match status" value="1"/>
</dbReference>
<dbReference type="PANTHER" id="PTHR11493">
    <property type="entry name" value="SULFITE REDUCTASE [NADPH] SUBUNIT BETA-RELATED"/>
    <property type="match status" value="1"/>
</dbReference>
<dbReference type="Pfam" id="PF01077">
    <property type="entry name" value="NIR_SIR"/>
    <property type="match status" value="1"/>
</dbReference>
<dbReference type="Pfam" id="PF03460">
    <property type="entry name" value="NIR_SIR_ferr"/>
    <property type="match status" value="2"/>
</dbReference>
<dbReference type="PRINTS" id="PR00397">
    <property type="entry name" value="SIROHAEM"/>
</dbReference>
<dbReference type="SUPFAM" id="SSF56014">
    <property type="entry name" value="Nitrite and sulphite reductase 4Fe-4S domain-like"/>
    <property type="match status" value="2"/>
</dbReference>
<dbReference type="SUPFAM" id="SSF55124">
    <property type="entry name" value="Nitrite/Sulfite reductase N-terminal domain-like"/>
    <property type="match status" value="2"/>
</dbReference>
<dbReference type="PROSITE" id="PS00365">
    <property type="entry name" value="NIR_SIR"/>
    <property type="match status" value="1"/>
</dbReference>
<name>CYSI_SHEPA</name>
<evidence type="ECO:0000255" key="1">
    <source>
        <dbReference type="HAMAP-Rule" id="MF_01540"/>
    </source>
</evidence>
<accession>A8H094</accession>
<comment type="function">
    <text evidence="1">Component of the sulfite reductase complex that catalyzes the 6-electron reduction of sulfite to sulfide. This is one of several activities required for the biosynthesis of L-cysteine from sulfate.</text>
</comment>
<comment type="catalytic activity">
    <reaction evidence="1">
        <text>hydrogen sulfide + 3 NADP(+) + 3 H2O = sulfite + 3 NADPH + 4 H(+)</text>
        <dbReference type="Rhea" id="RHEA:13801"/>
        <dbReference type="ChEBI" id="CHEBI:15377"/>
        <dbReference type="ChEBI" id="CHEBI:15378"/>
        <dbReference type="ChEBI" id="CHEBI:17359"/>
        <dbReference type="ChEBI" id="CHEBI:29919"/>
        <dbReference type="ChEBI" id="CHEBI:57783"/>
        <dbReference type="ChEBI" id="CHEBI:58349"/>
        <dbReference type="EC" id="1.8.1.2"/>
    </reaction>
</comment>
<comment type="cofactor">
    <cofactor evidence="1">
        <name>siroheme</name>
        <dbReference type="ChEBI" id="CHEBI:60052"/>
    </cofactor>
    <text evidence="1">Binds 1 siroheme per subunit.</text>
</comment>
<comment type="cofactor">
    <cofactor evidence="1">
        <name>[4Fe-4S] cluster</name>
        <dbReference type="ChEBI" id="CHEBI:49883"/>
    </cofactor>
    <text evidence="1">Binds 1 [4Fe-4S] cluster per subunit.</text>
</comment>
<comment type="pathway">
    <text evidence="1">Sulfur metabolism; hydrogen sulfide biosynthesis; hydrogen sulfide from sulfite (NADPH route): step 1/1.</text>
</comment>
<comment type="subunit">
    <text evidence="1">Alpha(8)-beta(8). The alpha component is a flavoprotein, the beta component is a hemoprotein.</text>
</comment>
<comment type="similarity">
    <text evidence="1">Belongs to the nitrite and sulfite reductase 4Fe-4S domain family.</text>
</comment>
<organism>
    <name type="scientific">Shewanella pealeana (strain ATCC 700345 / ANG-SQ1)</name>
    <dbReference type="NCBI Taxonomy" id="398579"/>
    <lineage>
        <taxon>Bacteria</taxon>
        <taxon>Pseudomonadati</taxon>
        <taxon>Pseudomonadota</taxon>
        <taxon>Gammaproteobacteria</taxon>
        <taxon>Alteromonadales</taxon>
        <taxon>Shewanellaceae</taxon>
        <taxon>Shewanella</taxon>
    </lineage>
</organism>
<proteinExistence type="inferred from homology"/>
<sequence>MSEQKLAVNEYLKTDSDYLRGTIQEGLDTAVTGAFSEGDQQLIKFHGFYQQDDRDLRNERKEQKLEPLYSFMLRARVAGGVCSPEQWLAVDKIASNLTSSNSIRLTTRQTFQYHGIPKRNLKTIIQDLDREALDSIAACGDVNRNVMCNPNPVESKLHQQAYAYAKQLSDNMLPHTKAYAEIWLDDEKLVTTEGEEVEPVYGKTYLPRKFKMAVAVPPDNDVDVYTNDLGFVAVAEGDELVGFNMVAGGGMGSTHGEVSTFPRLADDFGYIKAEDTLKFAEAVMTIQRDWGNRENRKLSRLKYTIVKHGFESFKAEIEARTGIKFEPKRDVVIGDRGDRYGWKQGVDDNWHLTLFIEGGRVKDFPGQPLQTGLREIAKVHQGDFRMTSNQNIIIAGVPSADKALIEGLARQHGLLGKLITETRGHSIACVALPTCALAMAEAERYFPDFLTKVEALQEKHGFLDQGIVIRMTGCPNGCARPFAAEIGLVGKAPGRYNLYLGASFEGTRLNKLYRENIQEAEILAELDALFALYVAERQAGETFGNYTVRSGVVAAVLDAAKDFHG</sequence>
<gene>
    <name evidence="1" type="primary">cysI</name>
    <name type="ordered locus">Spea_0654</name>
</gene>
<protein>
    <recommendedName>
        <fullName evidence="1">Sulfite reductase [NADPH] hemoprotein beta-component</fullName>
        <shortName evidence="1">SiR-HP</shortName>
        <shortName evidence="1">SiRHP</shortName>
        <ecNumber evidence="1">1.8.1.2</ecNumber>
    </recommendedName>
</protein>
<feature type="chain" id="PRO_0000388516" description="Sulfite reductase [NADPH] hemoprotein beta-component">
    <location>
        <begin position="1"/>
        <end position="565"/>
    </location>
</feature>
<feature type="binding site" evidence="1">
    <location>
        <position position="429"/>
    </location>
    <ligand>
        <name>[4Fe-4S] cluster</name>
        <dbReference type="ChEBI" id="CHEBI:49883"/>
    </ligand>
</feature>
<feature type="binding site" evidence="1">
    <location>
        <position position="435"/>
    </location>
    <ligand>
        <name>[4Fe-4S] cluster</name>
        <dbReference type="ChEBI" id="CHEBI:49883"/>
    </ligand>
</feature>
<feature type="binding site" evidence="1">
    <location>
        <position position="474"/>
    </location>
    <ligand>
        <name>[4Fe-4S] cluster</name>
        <dbReference type="ChEBI" id="CHEBI:49883"/>
    </ligand>
</feature>
<feature type="binding site" evidence="1">
    <location>
        <position position="478"/>
    </location>
    <ligand>
        <name>[4Fe-4S] cluster</name>
        <dbReference type="ChEBI" id="CHEBI:49883"/>
    </ligand>
</feature>
<feature type="binding site" description="axial binding residue" evidence="1">
    <location>
        <position position="478"/>
    </location>
    <ligand>
        <name>siroheme</name>
        <dbReference type="ChEBI" id="CHEBI:60052"/>
    </ligand>
    <ligandPart>
        <name>Fe</name>
        <dbReference type="ChEBI" id="CHEBI:18248"/>
    </ligandPart>
</feature>
<keyword id="KW-0004">4Fe-4S</keyword>
<keyword id="KW-0028">Amino-acid biosynthesis</keyword>
<keyword id="KW-0198">Cysteine biosynthesis</keyword>
<keyword id="KW-0349">Heme</keyword>
<keyword id="KW-0408">Iron</keyword>
<keyword id="KW-0411">Iron-sulfur</keyword>
<keyword id="KW-0479">Metal-binding</keyword>
<keyword id="KW-0521">NADP</keyword>
<keyword id="KW-0560">Oxidoreductase</keyword>
<keyword id="KW-1185">Reference proteome</keyword>